<keyword id="KW-0002">3D-structure</keyword>
<keyword id="KW-0007">Acetylation</keyword>
<keyword id="KW-0067">ATP-binding</keyword>
<keyword id="KW-0143">Chaperone</keyword>
<keyword id="KW-0963">Cytoplasm</keyword>
<keyword id="KW-0378">Hydrolase</keyword>
<keyword id="KW-1017">Isopeptide bond</keyword>
<keyword id="KW-0460">Magnesium</keyword>
<keyword id="KW-0479">Metal-binding</keyword>
<keyword id="KW-0547">Nucleotide-binding</keyword>
<keyword id="KW-0597">Phosphoprotein</keyword>
<keyword id="KW-1185">Reference proteome</keyword>
<keyword id="KW-0832">Ubl conjugation</keyword>
<evidence type="ECO:0000250" key="1">
    <source>
        <dbReference type="UniProtKB" id="P78371"/>
    </source>
</evidence>
<evidence type="ECO:0000250" key="2">
    <source>
        <dbReference type="UniProtKB" id="P80314"/>
    </source>
</evidence>
<evidence type="ECO:0000305" key="3"/>
<dbReference type="EC" id="3.6.1.-" evidence="1"/>
<dbReference type="EMBL" id="BC103298">
    <property type="protein sequence ID" value="AAI03299.1"/>
    <property type="molecule type" value="mRNA"/>
</dbReference>
<dbReference type="RefSeq" id="NP_001029411.1">
    <property type="nucleotide sequence ID" value="NM_001034239.1"/>
</dbReference>
<dbReference type="PDB" id="3IYG">
    <property type="method" value="EM"/>
    <property type="chains" value="B=14-526"/>
</dbReference>
<dbReference type="PDB" id="3KTT">
    <property type="method" value="EM"/>
    <property type="chains" value="B=14-526"/>
</dbReference>
<dbReference type="PDB" id="4A0O">
    <property type="method" value="EM"/>
    <property type="resolution" value="10.50 A"/>
    <property type="chains" value="A/B/C/D/E/F/G/H/I/J/K/L/M/N/O/P=14-526"/>
</dbReference>
<dbReference type="PDB" id="4A0V">
    <property type="method" value="EM"/>
    <property type="resolution" value="10.70 A"/>
    <property type="chains" value="A/B/C/D/E/F/G/H/I/J/K/L/M/N/O/P=14-526"/>
</dbReference>
<dbReference type="PDB" id="4A0W">
    <property type="method" value="EM"/>
    <property type="resolution" value="13.90 A"/>
    <property type="chains" value="A/B/C/D/E/F/G/H/I/J/K/L/M/N/O/P=14-526"/>
</dbReference>
<dbReference type="PDB" id="4A13">
    <property type="method" value="EM"/>
    <property type="resolution" value="11.30 A"/>
    <property type="chains" value="A/B/C/D/E/F/G/H/I/J/K/L/M/N/O/P=14-526"/>
</dbReference>
<dbReference type="PDB" id="4B2T">
    <property type="method" value="X-ray"/>
    <property type="resolution" value="5.50 A"/>
    <property type="chains" value="B/b=1-535"/>
</dbReference>
<dbReference type="PDBsum" id="3IYG"/>
<dbReference type="PDBsum" id="3KTT"/>
<dbReference type="PDBsum" id="4A0O"/>
<dbReference type="PDBsum" id="4A0V"/>
<dbReference type="PDBsum" id="4A0W"/>
<dbReference type="PDBsum" id="4A13"/>
<dbReference type="PDBsum" id="4B2T"/>
<dbReference type="EMDB" id="EMD-50664"/>
<dbReference type="SMR" id="Q3ZBH0"/>
<dbReference type="BioGRID" id="161961">
    <property type="interactions" value="4"/>
</dbReference>
<dbReference type="CORUM" id="Q3ZBH0"/>
<dbReference type="DIP" id="DIP-58618N"/>
<dbReference type="FunCoup" id="Q3ZBH0">
    <property type="interactions" value="4518"/>
</dbReference>
<dbReference type="IntAct" id="Q3ZBH0">
    <property type="interactions" value="3"/>
</dbReference>
<dbReference type="STRING" id="9913.ENSBTAP00000025496"/>
<dbReference type="PaxDb" id="9913-ENSBTAP00000025496"/>
<dbReference type="PeptideAtlas" id="Q3ZBH0"/>
<dbReference type="Ensembl" id="ENSBTAT00000025496.6">
    <property type="protein sequence ID" value="ENSBTAP00000025496.5"/>
    <property type="gene ID" value="ENSBTAG00000019156.7"/>
</dbReference>
<dbReference type="GeneID" id="505313"/>
<dbReference type="KEGG" id="bta:505313"/>
<dbReference type="CTD" id="10576"/>
<dbReference type="VEuPathDB" id="HostDB:ENSBTAG00000019156"/>
<dbReference type="VGNC" id="VGNC:26995">
    <property type="gene designation" value="CCT2"/>
</dbReference>
<dbReference type="eggNOG" id="KOG0363">
    <property type="taxonomic scope" value="Eukaryota"/>
</dbReference>
<dbReference type="GeneTree" id="ENSGT00550000074930"/>
<dbReference type="HOGENOM" id="CLU_008891_6_2_1"/>
<dbReference type="InParanoid" id="Q3ZBH0"/>
<dbReference type="OMA" id="CAEMVMS"/>
<dbReference type="OrthoDB" id="10259763at2759"/>
<dbReference type="TreeFam" id="TF105645"/>
<dbReference type="BRENDA" id="3.6.4.B10">
    <property type="organism ID" value="908"/>
</dbReference>
<dbReference type="Reactome" id="R-BTA-390471">
    <property type="pathway name" value="Association of TriC/CCT with target proteins during biosynthesis"/>
</dbReference>
<dbReference type="Reactome" id="R-BTA-6798695">
    <property type="pathway name" value="Neutrophil degranulation"/>
</dbReference>
<dbReference type="Reactome" id="R-BTA-6814122">
    <property type="pathway name" value="Cooperation of PDCL (PhLP1) and TRiC/CCT in G-protein beta folding"/>
</dbReference>
<dbReference type="Reactome" id="R-BTA-9013418">
    <property type="pathway name" value="RHOBTB2 GTPase cycle"/>
</dbReference>
<dbReference type="Reactome" id="R-BTA-9013422">
    <property type="pathway name" value="RHOBTB1 GTPase cycle"/>
</dbReference>
<dbReference type="EvolutionaryTrace" id="Q3ZBH0"/>
<dbReference type="Proteomes" id="UP000009136">
    <property type="component" value="Chromosome 5"/>
</dbReference>
<dbReference type="Bgee" id="ENSBTAG00000019156">
    <property type="expression patterns" value="Expressed in spermatocyte and 105 other cell types or tissues"/>
</dbReference>
<dbReference type="GO" id="GO:0044297">
    <property type="term" value="C:cell body"/>
    <property type="evidence" value="ECO:0007669"/>
    <property type="project" value="Ensembl"/>
</dbReference>
<dbReference type="GO" id="GO:0005832">
    <property type="term" value="C:chaperonin-containing T-complex"/>
    <property type="evidence" value="ECO:0000314"/>
    <property type="project" value="UniProtKB"/>
</dbReference>
<dbReference type="GO" id="GO:0005874">
    <property type="term" value="C:microtubule"/>
    <property type="evidence" value="ECO:0007669"/>
    <property type="project" value="Ensembl"/>
</dbReference>
<dbReference type="GO" id="GO:0002199">
    <property type="term" value="C:zona pellucida receptor complex"/>
    <property type="evidence" value="ECO:0007669"/>
    <property type="project" value="Ensembl"/>
</dbReference>
<dbReference type="GO" id="GO:0005524">
    <property type="term" value="F:ATP binding"/>
    <property type="evidence" value="ECO:0007669"/>
    <property type="project" value="UniProtKB-KW"/>
</dbReference>
<dbReference type="GO" id="GO:0016887">
    <property type="term" value="F:ATP hydrolysis activity"/>
    <property type="evidence" value="ECO:0007669"/>
    <property type="project" value="InterPro"/>
</dbReference>
<dbReference type="GO" id="GO:0140662">
    <property type="term" value="F:ATP-dependent protein folding chaperone"/>
    <property type="evidence" value="ECO:0007669"/>
    <property type="project" value="InterPro"/>
</dbReference>
<dbReference type="GO" id="GO:0031625">
    <property type="term" value="F:ubiquitin protein ligase binding"/>
    <property type="evidence" value="ECO:0007669"/>
    <property type="project" value="Ensembl"/>
</dbReference>
<dbReference type="GO" id="GO:0051082">
    <property type="term" value="F:unfolded protein binding"/>
    <property type="evidence" value="ECO:0000318"/>
    <property type="project" value="GO_Central"/>
</dbReference>
<dbReference type="GO" id="GO:0007339">
    <property type="term" value="P:binding of sperm to zona pellucida"/>
    <property type="evidence" value="ECO:0007669"/>
    <property type="project" value="Ensembl"/>
</dbReference>
<dbReference type="GO" id="GO:0051086">
    <property type="term" value="P:chaperone mediated protein folding independent of cofactor"/>
    <property type="evidence" value="ECO:0007669"/>
    <property type="project" value="Ensembl"/>
</dbReference>
<dbReference type="GO" id="GO:0051131">
    <property type="term" value="P:chaperone-mediated protein complex assembly"/>
    <property type="evidence" value="ECO:0007669"/>
    <property type="project" value="Ensembl"/>
</dbReference>
<dbReference type="GO" id="GO:1904874">
    <property type="term" value="P:positive regulation of telomerase RNA localization to Cajal body"/>
    <property type="evidence" value="ECO:0007669"/>
    <property type="project" value="Ensembl"/>
</dbReference>
<dbReference type="GO" id="GO:0032212">
    <property type="term" value="P:positive regulation of telomere maintenance via telomerase"/>
    <property type="evidence" value="ECO:0007669"/>
    <property type="project" value="Ensembl"/>
</dbReference>
<dbReference type="GO" id="GO:0006457">
    <property type="term" value="P:protein folding"/>
    <property type="evidence" value="ECO:0000318"/>
    <property type="project" value="GO_Central"/>
</dbReference>
<dbReference type="GO" id="GO:0050821">
    <property type="term" value="P:protein stabilization"/>
    <property type="evidence" value="ECO:0007669"/>
    <property type="project" value="Ensembl"/>
</dbReference>
<dbReference type="GO" id="GO:0090666">
    <property type="term" value="P:scaRNA localization to Cajal body"/>
    <property type="evidence" value="ECO:0007669"/>
    <property type="project" value="Ensembl"/>
</dbReference>
<dbReference type="CDD" id="cd03336">
    <property type="entry name" value="TCP1_beta"/>
    <property type="match status" value="1"/>
</dbReference>
<dbReference type="FunFam" id="3.30.260.10:FF:000046">
    <property type="entry name" value="Chaperonin containing TCP1 subunit 2"/>
    <property type="match status" value="1"/>
</dbReference>
<dbReference type="FunFam" id="3.50.7.10:FF:000002">
    <property type="entry name" value="T-complex protein 1 subunit beta"/>
    <property type="match status" value="1"/>
</dbReference>
<dbReference type="FunFam" id="1.10.560.10:FF:000017">
    <property type="entry name" value="T-complex protein 1 subunit eta"/>
    <property type="match status" value="1"/>
</dbReference>
<dbReference type="FunFam" id="1.10.560.10:FF:000045">
    <property type="entry name" value="T-complex protein 1 subunit eta"/>
    <property type="match status" value="1"/>
</dbReference>
<dbReference type="Gene3D" id="3.50.7.10">
    <property type="entry name" value="GroEL"/>
    <property type="match status" value="1"/>
</dbReference>
<dbReference type="Gene3D" id="1.10.560.10">
    <property type="entry name" value="GroEL-like equatorial domain"/>
    <property type="match status" value="1"/>
</dbReference>
<dbReference type="Gene3D" id="3.30.260.10">
    <property type="entry name" value="TCP-1-like chaperonin intermediate domain"/>
    <property type="match status" value="1"/>
</dbReference>
<dbReference type="InterPro" id="IPR012716">
    <property type="entry name" value="Chap_CCT_beta"/>
</dbReference>
<dbReference type="InterPro" id="IPR017998">
    <property type="entry name" value="Chaperone_TCP-1"/>
</dbReference>
<dbReference type="InterPro" id="IPR002194">
    <property type="entry name" value="Chaperonin_TCP-1_CS"/>
</dbReference>
<dbReference type="InterPro" id="IPR002423">
    <property type="entry name" value="Cpn60/GroEL/TCP-1"/>
</dbReference>
<dbReference type="InterPro" id="IPR027409">
    <property type="entry name" value="GroEL-like_apical_dom_sf"/>
</dbReference>
<dbReference type="InterPro" id="IPR027413">
    <property type="entry name" value="GROEL-like_equatorial_sf"/>
</dbReference>
<dbReference type="InterPro" id="IPR027410">
    <property type="entry name" value="TCP-1-like_intermed_sf"/>
</dbReference>
<dbReference type="InterPro" id="IPR053374">
    <property type="entry name" value="TCP-1_chaperonin"/>
</dbReference>
<dbReference type="NCBIfam" id="TIGR02341">
    <property type="entry name" value="chap_CCT_beta"/>
    <property type="match status" value="1"/>
</dbReference>
<dbReference type="NCBIfam" id="NF041083">
    <property type="entry name" value="thermosome_beta"/>
    <property type="match status" value="1"/>
</dbReference>
<dbReference type="PANTHER" id="PTHR11353">
    <property type="entry name" value="CHAPERONIN"/>
    <property type="match status" value="1"/>
</dbReference>
<dbReference type="Pfam" id="PF00118">
    <property type="entry name" value="Cpn60_TCP1"/>
    <property type="match status" value="1"/>
</dbReference>
<dbReference type="PRINTS" id="PR00304">
    <property type="entry name" value="TCOMPLEXTCP1"/>
</dbReference>
<dbReference type="SUPFAM" id="SSF52029">
    <property type="entry name" value="GroEL apical domain-like"/>
    <property type="match status" value="1"/>
</dbReference>
<dbReference type="SUPFAM" id="SSF48592">
    <property type="entry name" value="GroEL equatorial domain-like"/>
    <property type="match status" value="1"/>
</dbReference>
<dbReference type="SUPFAM" id="SSF54849">
    <property type="entry name" value="GroEL-intermediate domain like"/>
    <property type="match status" value="1"/>
</dbReference>
<dbReference type="PROSITE" id="PS00750">
    <property type="entry name" value="TCP1_1"/>
    <property type="match status" value="1"/>
</dbReference>
<dbReference type="PROSITE" id="PS00751">
    <property type="entry name" value="TCP1_2"/>
    <property type="match status" value="1"/>
</dbReference>
<dbReference type="PROSITE" id="PS00995">
    <property type="entry name" value="TCP1_3"/>
    <property type="match status" value="1"/>
</dbReference>
<accession>Q3ZBH0</accession>
<sequence>MASLSLAPVNIFKAGADEERAETARLSSFIGAIAIGDLVKSTLGPKGMDKILLSSGRDASLMVTNDGATILKNIGVDNPAAKVLVDMSRVQDDEVGDGTTSVTVLAAELLREAESLIAKKIHPQTIIAGWREATKAARQALLNSAVDHGSDEVKFRQDLMNIAGTTLSSKLLTHHKDHFTKLAVEAVLRLKGSGNLEAIHVIKKLGGSLADSYLDEGFLLDKKIGVNQPKRIENAKILIANTGMDTDKIKIFGSRVRVDSTAKVAEIEHAEKEKMKEKVERILKHGINCFINRQLIYNYPEQLFGAAGVMAIEHADFVGVERLALVTGGEIASTFDHPELVKLGSCKLIEEVMIGEDKLIHFSGVALGEACTIVLRGATQQILDEAERSLHDALCVLAQTVKDSRTVYGGGCSEMLMAHAVTQLASRTPGKEAVAMESYAKALRMLPTIIADNAGYDSADLVAQLRAAHSEGKTTAGLDMKEGTIGDMSVLGITESFQVKRQVLLSAAEAAEVILRVDNIIKAAPRKRVPDHHPC</sequence>
<name>TCPB_BOVIN</name>
<proteinExistence type="evidence at protein level"/>
<gene>
    <name type="primary">CCT2</name>
</gene>
<comment type="function">
    <text evidence="1">Component of the chaperonin-containing T-complex (TRiC), a molecular chaperone complex that assists the folding of actin, tubulin and other proteins upon ATP hydrolysis. The TRiC complex mediates the folding of WRAP53/TCAB1, thereby regulating telomere maintenance. As part of the TRiC complex may play a role in the assembly of BBSome, a complex involved in ciliogenesis regulating transports vesicles to the cilia.</text>
</comment>
<comment type="catalytic activity">
    <reaction evidence="1">
        <text>ATP + H2O = ADP + phosphate + H(+)</text>
        <dbReference type="Rhea" id="RHEA:13065"/>
        <dbReference type="ChEBI" id="CHEBI:15377"/>
        <dbReference type="ChEBI" id="CHEBI:15378"/>
        <dbReference type="ChEBI" id="CHEBI:30616"/>
        <dbReference type="ChEBI" id="CHEBI:43474"/>
        <dbReference type="ChEBI" id="CHEBI:456216"/>
    </reaction>
</comment>
<comment type="subunit">
    <text evidence="1 2">Component of the chaperonin-containing T-complex (TRiC), a hexadecamer composed of two identical back-to-back stacked rings enclosing a protein folding chamber. Each ring is made up of eight different subunits: TCP1/CCT1, CCT2, CCT3, CCT4, CCT5, CCT6A/CCT6, CCT7, CCT8. Interacts with PACRG. Interacts with FLCN. Interacts with DLEC1 (By similarity). Interacts with SVEP1 (By similarity).</text>
</comment>
<comment type="interaction">
    <interactant intactId="EBI-9014138">
        <id>Q3ZBH0</id>
    </interactant>
    <interactant intactId="EBI-15839846">
        <id>F1MWD3</id>
        <label>CCT5</label>
    </interactant>
    <organismsDiffer>false</organismsDiffer>
    <experiments>6</experiments>
</comment>
<comment type="subcellular location">
    <subcellularLocation>
        <location evidence="1">Cytoplasm</location>
    </subcellularLocation>
</comment>
<comment type="similarity">
    <text evidence="3">Belongs to the TCP-1 chaperonin family.</text>
</comment>
<protein>
    <recommendedName>
        <fullName>T-complex protein 1 subunit beta</fullName>
        <shortName>TCP-1-beta</shortName>
        <ecNumber evidence="1">3.6.1.-</ecNumber>
    </recommendedName>
    <alternativeName>
        <fullName>CCT-beta</fullName>
    </alternativeName>
</protein>
<feature type="initiator methionine" description="Removed" evidence="1">
    <location>
        <position position="1"/>
    </location>
</feature>
<feature type="chain" id="PRO_0000236259" description="T-complex protein 1 subunit beta">
    <location>
        <begin position="2"/>
        <end position="535"/>
    </location>
</feature>
<feature type="binding site" evidence="1">
    <location>
        <position position="44"/>
    </location>
    <ligand>
        <name>ADP</name>
        <dbReference type="ChEBI" id="CHEBI:456216"/>
    </ligand>
</feature>
<feature type="binding site" evidence="1">
    <location>
        <position position="44"/>
    </location>
    <ligand>
        <name>ATP</name>
        <dbReference type="ChEBI" id="CHEBI:30616"/>
    </ligand>
</feature>
<feature type="binding site" evidence="1">
    <location>
        <position position="97"/>
    </location>
    <ligand>
        <name>Mg(2+)</name>
        <dbReference type="ChEBI" id="CHEBI:18420"/>
    </ligand>
</feature>
<feature type="binding site" evidence="1">
    <location>
        <position position="98"/>
    </location>
    <ligand>
        <name>ADP</name>
        <dbReference type="ChEBI" id="CHEBI:456216"/>
    </ligand>
</feature>
<feature type="binding site" evidence="1">
    <location>
        <position position="98"/>
    </location>
    <ligand>
        <name>ATP</name>
        <dbReference type="ChEBI" id="CHEBI:30616"/>
    </ligand>
</feature>
<feature type="binding site" evidence="1">
    <location>
        <position position="99"/>
    </location>
    <ligand>
        <name>ADP</name>
        <dbReference type="ChEBI" id="CHEBI:456216"/>
    </ligand>
</feature>
<feature type="binding site" evidence="1">
    <location>
        <position position="99"/>
    </location>
    <ligand>
        <name>ATP</name>
        <dbReference type="ChEBI" id="CHEBI:30616"/>
    </ligand>
</feature>
<feature type="binding site" evidence="1">
    <location>
        <position position="100"/>
    </location>
    <ligand>
        <name>ADP</name>
        <dbReference type="ChEBI" id="CHEBI:456216"/>
    </ligand>
</feature>
<feature type="binding site" evidence="1">
    <location>
        <position position="100"/>
    </location>
    <ligand>
        <name>ATP</name>
        <dbReference type="ChEBI" id="CHEBI:30616"/>
    </ligand>
</feature>
<feature type="binding site" evidence="1">
    <location>
        <position position="101"/>
    </location>
    <ligand>
        <name>ADP</name>
        <dbReference type="ChEBI" id="CHEBI:456216"/>
    </ligand>
</feature>
<feature type="binding site" evidence="1">
    <location>
        <position position="168"/>
    </location>
    <ligand>
        <name>ADP</name>
        <dbReference type="ChEBI" id="CHEBI:456216"/>
    </ligand>
</feature>
<feature type="binding site" evidence="1">
    <location>
        <position position="169"/>
    </location>
    <ligand>
        <name>ADP</name>
        <dbReference type="ChEBI" id="CHEBI:456216"/>
    </ligand>
</feature>
<feature type="binding site" evidence="1">
    <location>
        <position position="410"/>
    </location>
    <ligand>
        <name>ADP</name>
        <dbReference type="ChEBI" id="CHEBI:456216"/>
    </ligand>
</feature>
<feature type="binding site" evidence="1">
    <location>
        <position position="495"/>
    </location>
    <ligand>
        <name>ADP</name>
        <dbReference type="ChEBI" id="CHEBI:456216"/>
    </ligand>
</feature>
<feature type="binding site" evidence="1">
    <location>
        <position position="495"/>
    </location>
    <ligand>
        <name>ATP</name>
        <dbReference type="ChEBI" id="CHEBI:30616"/>
    </ligand>
</feature>
<feature type="binding site" evidence="1">
    <location>
        <position position="500"/>
    </location>
    <ligand>
        <name>ADP</name>
        <dbReference type="ChEBI" id="CHEBI:456216"/>
    </ligand>
</feature>
<feature type="binding site" evidence="1">
    <location>
        <position position="500"/>
    </location>
    <ligand>
        <name>ATP</name>
        <dbReference type="ChEBI" id="CHEBI:30616"/>
    </ligand>
</feature>
<feature type="modified residue" description="N-acetylalanine" evidence="1">
    <location>
        <position position="2"/>
    </location>
</feature>
<feature type="modified residue" description="Phosphoserine" evidence="1">
    <location>
        <position position="3"/>
    </location>
</feature>
<feature type="modified residue" description="N6-acetyllysine" evidence="1">
    <location>
        <position position="13"/>
    </location>
</feature>
<feature type="modified residue" description="Phosphoserine" evidence="1">
    <location>
        <position position="60"/>
    </location>
</feature>
<feature type="modified residue" description="N6-acetyllysine" evidence="1">
    <location>
        <position position="154"/>
    </location>
</feature>
<feature type="modified residue" description="N6-acetyllysine" evidence="1">
    <location>
        <position position="181"/>
    </location>
</feature>
<feature type="modified residue" description="Phosphoserine" evidence="1">
    <location>
        <position position="260"/>
    </location>
</feature>
<feature type="modified residue" description="Phosphothreonine" evidence="1">
    <location>
        <position position="261"/>
    </location>
</feature>
<feature type="cross-link" description="Glycyl lysine isopeptide (Lys-Gly) (interchain with G-Cter in SUMO2)" evidence="1">
    <location>
        <position position="248"/>
    </location>
</feature>
<reference key="1">
    <citation type="submission" date="2005-08" db="EMBL/GenBank/DDBJ databases">
        <authorList>
            <consortium name="NIH - Mammalian Gene Collection (MGC) project"/>
        </authorList>
    </citation>
    <scope>NUCLEOTIDE SEQUENCE [LARGE SCALE MRNA]</scope>
    <source>
        <strain>Hereford</strain>
        <tissue>Uterus</tissue>
    </source>
</reference>
<organism>
    <name type="scientific">Bos taurus</name>
    <name type="common">Bovine</name>
    <dbReference type="NCBI Taxonomy" id="9913"/>
    <lineage>
        <taxon>Eukaryota</taxon>
        <taxon>Metazoa</taxon>
        <taxon>Chordata</taxon>
        <taxon>Craniata</taxon>
        <taxon>Vertebrata</taxon>
        <taxon>Euteleostomi</taxon>
        <taxon>Mammalia</taxon>
        <taxon>Eutheria</taxon>
        <taxon>Laurasiatheria</taxon>
        <taxon>Artiodactyla</taxon>
        <taxon>Ruminantia</taxon>
        <taxon>Pecora</taxon>
        <taxon>Bovidae</taxon>
        <taxon>Bovinae</taxon>
        <taxon>Bos</taxon>
    </lineage>
</organism>